<sequence length="290" mass="31307">MKPERNSLSEKIRNAEKIVIKVGSARLSGLPSEVNDFLFQLVSDIRHLRDLGKKVILVSSGAIARGRLLLSELPSTISSGDSLAEKQALAAMGQNRLVNLYDSFFSKVNLSIAQILFGVLDLESKEGYKNLKNTFTQLVEWGILPVVNENDSVATEEVKFGDNDMLSALVSLIVEADLLIILTGVDGFLKEEKVVPFLEKISKEDLGLAGGPSGPGTGGMFTKLKSAGLLSEAGIPTAILNGKKMHVIREFLEKNSIGTLVAPSGNRVFSEEDVKEIIRKNRNGNGGNSL</sequence>
<dbReference type="EC" id="2.7.2.11" evidence="1"/>
<dbReference type="EMBL" id="U73651">
    <property type="protein sequence ID" value="AAB39853.1"/>
    <property type="molecule type" value="Genomic_DNA"/>
</dbReference>
<dbReference type="EMBL" id="AE010300">
    <property type="protein sequence ID" value="AAN48052.1"/>
    <property type="molecule type" value="Genomic_DNA"/>
</dbReference>
<dbReference type="RefSeq" id="NP_711034.1">
    <property type="nucleotide sequence ID" value="NC_004342.2"/>
</dbReference>
<dbReference type="RefSeq" id="WP_000801906.1">
    <property type="nucleotide sequence ID" value="NC_004342.2"/>
</dbReference>
<dbReference type="SMR" id="P94871"/>
<dbReference type="FunCoup" id="P94871">
    <property type="interactions" value="362"/>
</dbReference>
<dbReference type="STRING" id="189518.LA_0853"/>
<dbReference type="PaxDb" id="189518-LA_0853"/>
<dbReference type="EnsemblBacteria" id="AAN48052">
    <property type="protein sequence ID" value="AAN48052"/>
    <property type="gene ID" value="LA_0853"/>
</dbReference>
<dbReference type="GeneID" id="61142650"/>
<dbReference type="KEGG" id="lil:LA_0853"/>
<dbReference type="PATRIC" id="fig|189518.3.peg.857"/>
<dbReference type="HOGENOM" id="CLU_025400_0_2_12"/>
<dbReference type="InParanoid" id="P94871"/>
<dbReference type="OrthoDB" id="9804434at2"/>
<dbReference type="UniPathway" id="UPA00098">
    <property type="reaction ID" value="UER00359"/>
</dbReference>
<dbReference type="Proteomes" id="UP000001408">
    <property type="component" value="Chromosome I"/>
</dbReference>
<dbReference type="GO" id="GO:0005829">
    <property type="term" value="C:cytosol"/>
    <property type="evidence" value="ECO:0000318"/>
    <property type="project" value="GO_Central"/>
</dbReference>
<dbReference type="GO" id="GO:0005524">
    <property type="term" value="F:ATP binding"/>
    <property type="evidence" value="ECO:0007669"/>
    <property type="project" value="UniProtKB-KW"/>
</dbReference>
<dbReference type="GO" id="GO:0004349">
    <property type="term" value="F:glutamate 5-kinase activity"/>
    <property type="evidence" value="ECO:0000318"/>
    <property type="project" value="GO_Central"/>
</dbReference>
<dbReference type="GO" id="GO:0055129">
    <property type="term" value="P:L-proline biosynthetic process"/>
    <property type="evidence" value="ECO:0007669"/>
    <property type="project" value="UniProtKB-UniRule"/>
</dbReference>
<dbReference type="GO" id="GO:0006561">
    <property type="term" value="P:proline biosynthetic process"/>
    <property type="evidence" value="ECO:0000318"/>
    <property type="project" value="GO_Central"/>
</dbReference>
<dbReference type="CDD" id="cd04242">
    <property type="entry name" value="AAK_G5K_ProB"/>
    <property type="match status" value="1"/>
</dbReference>
<dbReference type="FunFam" id="3.40.1160.10:FF:000006">
    <property type="entry name" value="Glutamate 5-kinase"/>
    <property type="match status" value="1"/>
</dbReference>
<dbReference type="Gene3D" id="3.40.1160.10">
    <property type="entry name" value="Acetylglutamate kinase-like"/>
    <property type="match status" value="1"/>
</dbReference>
<dbReference type="HAMAP" id="MF_00456">
    <property type="entry name" value="ProB"/>
    <property type="match status" value="1"/>
</dbReference>
<dbReference type="InterPro" id="IPR036393">
    <property type="entry name" value="AceGlu_kinase-like_sf"/>
</dbReference>
<dbReference type="InterPro" id="IPR001048">
    <property type="entry name" value="Asp/Glu/Uridylate_kinase"/>
</dbReference>
<dbReference type="InterPro" id="IPR041739">
    <property type="entry name" value="G5K_ProB"/>
</dbReference>
<dbReference type="InterPro" id="IPR001057">
    <property type="entry name" value="Glu/AcGlu_kinase"/>
</dbReference>
<dbReference type="InterPro" id="IPR011529">
    <property type="entry name" value="Glu_5kinase"/>
</dbReference>
<dbReference type="InterPro" id="IPR005715">
    <property type="entry name" value="Glu_5kinase/COase_Synthase"/>
</dbReference>
<dbReference type="InterPro" id="IPR019797">
    <property type="entry name" value="Glutamate_5-kinase_CS"/>
</dbReference>
<dbReference type="NCBIfam" id="TIGR01027">
    <property type="entry name" value="proB"/>
    <property type="match status" value="1"/>
</dbReference>
<dbReference type="PANTHER" id="PTHR43654">
    <property type="entry name" value="GLUTAMATE 5-KINASE"/>
    <property type="match status" value="1"/>
</dbReference>
<dbReference type="PANTHER" id="PTHR43654:SF1">
    <property type="entry name" value="ISOPENTENYL PHOSPHATE KINASE"/>
    <property type="match status" value="1"/>
</dbReference>
<dbReference type="Pfam" id="PF00696">
    <property type="entry name" value="AA_kinase"/>
    <property type="match status" value="1"/>
</dbReference>
<dbReference type="PIRSF" id="PIRSF000729">
    <property type="entry name" value="GK"/>
    <property type="match status" value="1"/>
</dbReference>
<dbReference type="PRINTS" id="PR00474">
    <property type="entry name" value="GLU5KINASE"/>
</dbReference>
<dbReference type="SUPFAM" id="SSF53633">
    <property type="entry name" value="Carbamate kinase-like"/>
    <property type="match status" value="1"/>
</dbReference>
<dbReference type="PROSITE" id="PS00902">
    <property type="entry name" value="GLUTAMATE_5_KINASE"/>
    <property type="match status" value="1"/>
</dbReference>
<evidence type="ECO:0000255" key="1">
    <source>
        <dbReference type="HAMAP-Rule" id="MF_00456"/>
    </source>
</evidence>
<organism>
    <name type="scientific">Leptospira interrogans serogroup Icterohaemorrhagiae serovar Lai (strain 56601)</name>
    <dbReference type="NCBI Taxonomy" id="189518"/>
    <lineage>
        <taxon>Bacteria</taxon>
        <taxon>Pseudomonadati</taxon>
        <taxon>Spirochaetota</taxon>
        <taxon>Spirochaetia</taxon>
        <taxon>Leptospirales</taxon>
        <taxon>Leptospiraceae</taxon>
        <taxon>Leptospira</taxon>
    </lineage>
</organism>
<reference key="1">
    <citation type="submission" date="1996-10" db="EMBL/GenBank/DDBJ databases">
        <authorList>
            <person name="Stamm L.V."/>
            <person name="Barnes N.Y."/>
        </authorList>
    </citation>
    <scope>NUCLEOTIDE SEQUENCE [GENOMIC DNA]</scope>
    <source>
        <strain>Serogroup Icterohaemorrhagiae</strain>
    </source>
</reference>
<reference key="2">
    <citation type="journal article" date="2003" name="Nature">
        <title>Unique physiological and pathogenic features of Leptospira interrogans revealed by whole-genome sequencing.</title>
        <authorList>
            <person name="Ren S.-X."/>
            <person name="Fu G."/>
            <person name="Jiang X.-G."/>
            <person name="Zeng R."/>
            <person name="Miao Y.-G."/>
            <person name="Xu H."/>
            <person name="Zhang Y.-X."/>
            <person name="Xiong H."/>
            <person name="Lu G."/>
            <person name="Lu L.-F."/>
            <person name="Jiang H.-Q."/>
            <person name="Jia J."/>
            <person name="Tu Y.-F."/>
            <person name="Jiang J.-X."/>
            <person name="Gu W.-Y."/>
            <person name="Zhang Y.-Q."/>
            <person name="Cai Z."/>
            <person name="Sheng H.-H."/>
            <person name="Yin H.-F."/>
            <person name="Zhang Y."/>
            <person name="Zhu G.-F."/>
            <person name="Wan M."/>
            <person name="Huang H.-L."/>
            <person name="Qian Z."/>
            <person name="Wang S.-Y."/>
            <person name="Ma W."/>
            <person name="Yao Z.-J."/>
            <person name="Shen Y."/>
            <person name="Qiang B.-Q."/>
            <person name="Xia Q.-C."/>
            <person name="Guo X.-K."/>
            <person name="Danchin A."/>
            <person name="Saint Girons I."/>
            <person name="Somerville R.L."/>
            <person name="Wen Y.-M."/>
            <person name="Shi M.-H."/>
            <person name="Chen Z."/>
            <person name="Xu J.-G."/>
            <person name="Zhao G.-P."/>
        </authorList>
    </citation>
    <scope>NUCLEOTIDE SEQUENCE [LARGE SCALE GENOMIC DNA]</scope>
    <source>
        <strain>56601</strain>
    </source>
</reference>
<accession>P94871</accession>
<comment type="function">
    <text evidence="1">Catalyzes the transfer of a phosphate group to glutamate to form L-glutamate 5-phosphate.</text>
</comment>
<comment type="catalytic activity">
    <reaction evidence="1">
        <text>L-glutamate + ATP = L-glutamyl 5-phosphate + ADP</text>
        <dbReference type="Rhea" id="RHEA:14877"/>
        <dbReference type="ChEBI" id="CHEBI:29985"/>
        <dbReference type="ChEBI" id="CHEBI:30616"/>
        <dbReference type="ChEBI" id="CHEBI:58274"/>
        <dbReference type="ChEBI" id="CHEBI:456216"/>
        <dbReference type="EC" id="2.7.2.11"/>
    </reaction>
</comment>
<comment type="pathway">
    <text evidence="1">Amino-acid biosynthesis; L-proline biosynthesis; L-glutamate 5-semialdehyde from L-glutamate: step 1/2.</text>
</comment>
<comment type="subcellular location">
    <subcellularLocation>
        <location evidence="1">Cytoplasm</location>
    </subcellularLocation>
</comment>
<comment type="similarity">
    <text evidence="1">Belongs to the glutamate 5-kinase family.</text>
</comment>
<name>PROB_LEPIN</name>
<protein>
    <recommendedName>
        <fullName evidence="1">Glutamate 5-kinase</fullName>
        <ecNumber evidence="1">2.7.2.11</ecNumber>
    </recommendedName>
    <alternativeName>
        <fullName evidence="1">Gamma-glutamyl kinase</fullName>
        <shortName evidence="1">GK</shortName>
    </alternativeName>
</protein>
<proteinExistence type="inferred from homology"/>
<keyword id="KW-0028">Amino-acid biosynthesis</keyword>
<keyword id="KW-0067">ATP-binding</keyword>
<keyword id="KW-0963">Cytoplasm</keyword>
<keyword id="KW-0418">Kinase</keyword>
<keyword id="KW-0547">Nucleotide-binding</keyword>
<keyword id="KW-0641">Proline biosynthesis</keyword>
<keyword id="KW-1185">Reference proteome</keyword>
<keyword id="KW-0808">Transferase</keyword>
<feature type="chain" id="PRO_0000109686" description="Glutamate 5-kinase">
    <location>
        <begin position="1"/>
        <end position="290"/>
    </location>
</feature>
<feature type="binding site" evidence="1">
    <location>
        <position position="21"/>
    </location>
    <ligand>
        <name>ATP</name>
        <dbReference type="ChEBI" id="CHEBI:30616"/>
    </ligand>
</feature>
<feature type="binding site" evidence="1">
    <location>
        <position position="60"/>
    </location>
    <ligand>
        <name>substrate</name>
    </ligand>
</feature>
<feature type="binding site" evidence="1">
    <location>
        <position position="151"/>
    </location>
    <ligand>
        <name>substrate</name>
    </ligand>
</feature>
<feature type="binding site" evidence="1">
    <location>
        <position position="163"/>
    </location>
    <ligand>
        <name>substrate</name>
    </ligand>
</feature>
<feature type="binding site" evidence="1">
    <location>
        <begin position="217"/>
        <end position="223"/>
    </location>
    <ligand>
        <name>ATP</name>
        <dbReference type="ChEBI" id="CHEBI:30616"/>
    </ligand>
</feature>
<gene>
    <name evidence="1" type="primary">proB</name>
    <name type="ordered locus">LA_0853</name>
</gene>